<reference key="1">
    <citation type="journal article" date="2007" name="J. Bacteriol.">
        <title>Complete genome sequence of Haemophilus somnus (Histophilus somni) strain 129Pt and comparison to Haemophilus ducreyi 35000HP and Haemophilus influenzae Rd.</title>
        <authorList>
            <person name="Challacombe J.F."/>
            <person name="Duncan A.J."/>
            <person name="Brettin T.S."/>
            <person name="Bruce D."/>
            <person name="Chertkov O."/>
            <person name="Detter J.C."/>
            <person name="Han C.S."/>
            <person name="Misra M."/>
            <person name="Richardson P."/>
            <person name="Tapia R."/>
            <person name="Thayer N."/>
            <person name="Xie G."/>
            <person name="Inzana T.J."/>
        </authorList>
    </citation>
    <scope>NUCLEOTIDE SEQUENCE [LARGE SCALE GENOMIC DNA]</scope>
    <source>
        <strain>129Pt</strain>
    </source>
</reference>
<proteinExistence type="inferred from homology"/>
<feature type="chain" id="PRO_1000016801" description="Queuine tRNA-ribosyltransferase">
    <location>
        <begin position="1"/>
        <end position="376"/>
    </location>
</feature>
<feature type="region of interest" description="RNA binding" evidence="1">
    <location>
        <begin position="249"/>
        <end position="255"/>
    </location>
</feature>
<feature type="region of interest" description="RNA binding; important for wobble base 34 recognition" evidence="1">
    <location>
        <begin position="273"/>
        <end position="277"/>
    </location>
</feature>
<feature type="active site" description="Proton acceptor" evidence="1">
    <location>
        <position position="93"/>
    </location>
</feature>
<feature type="active site" description="Nucleophile" evidence="1">
    <location>
        <position position="268"/>
    </location>
</feature>
<feature type="binding site" evidence="1">
    <location>
        <begin position="93"/>
        <end position="97"/>
    </location>
    <ligand>
        <name>substrate</name>
    </ligand>
</feature>
<feature type="binding site" evidence="1">
    <location>
        <position position="147"/>
    </location>
    <ligand>
        <name>substrate</name>
    </ligand>
</feature>
<feature type="binding site" evidence="1">
    <location>
        <position position="191"/>
    </location>
    <ligand>
        <name>substrate</name>
    </ligand>
</feature>
<feature type="binding site" evidence="1">
    <location>
        <position position="218"/>
    </location>
    <ligand>
        <name>substrate</name>
    </ligand>
</feature>
<feature type="binding site" evidence="1">
    <location>
        <position position="306"/>
    </location>
    <ligand>
        <name>Zn(2+)</name>
        <dbReference type="ChEBI" id="CHEBI:29105"/>
    </ligand>
</feature>
<feature type="binding site" evidence="1">
    <location>
        <position position="308"/>
    </location>
    <ligand>
        <name>Zn(2+)</name>
        <dbReference type="ChEBI" id="CHEBI:29105"/>
    </ligand>
</feature>
<feature type="binding site" evidence="1">
    <location>
        <position position="311"/>
    </location>
    <ligand>
        <name>Zn(2+)</name>
        <dbReference type="ChEBI" id="CHEBI:29105"/>
    </ligand>
</feature>
<feature type="binding site" evidence="1">
    <location>
        <position position="337"/>
    </location>
    <ligand>
        <name>Zn(2+)</name>
        <dbReference type="ChEBI" id="CHEBI:29105"/>
    </ligand>
</feature>
<gene>
    <name evidence="1" type="primary">tgt</name>
    <name type="ordered locus">HS_1315</name>
</gene>
<dbReference type="EC" id="2.4.2.29" evidence="1"/>
<dbReference type="EMBL" id="CP000436">
    <property type="protein sequence ID" value="ABI25590.1"/>
    <property type="molecule type" value="Genomic_DNA"/>
</dbReference>
<dbReference type="SMR" id="Q0I4R8"/>
<dbReference type="KEGG" id="hso:HS_1315"/>
<dbReference type="eggNOG" id="COG0343">
    <property type="taxonomic scope" value="Bacteria"/>
</dbReference>
<dbReference type="HOGENOM" id="CLU_022060_0_1_6"/>
<dbReference type="UniPathway" id="UPA00392"/>
<dbReference type="GO" id="GO:0005829">
    <property type="term" value="C:cytosol"/>
    <property type="evidence" value="ECO:0007669"/>
    <property type="project" value="TreeGrafter"/>
</dbReference>
<dbReference type="GO" id="GO:0046872">
    <property type="term" value="F:metal ion binding"/>
    <property type="evidence" value="ECO:0007669"/>
    <property type="project" value="UniProtKB-KW"/>
</dbReference>
<dbReference type="GO" id="GO:0008479">
    <property type="term" value="F:tRNA-guanosine(34) queuine transglycosylase activity"/>
    <property type="evidence" value="ECO:0007669"/>
    <property type="project" value="UniProtKB-UniRule"/>
</dbReference>
<dbReference type="GO" id="GO:0008616">
    <property type="term" value="P:queuosine biosynthetic process"/>
    <property type="evidence" value="ECO:0007669"/>
    <property type="project" value="UniProtKB-UniRule"/>
</dbReference>
<dbReference type="GO" id="GO:0002099">
    <property type="term" value="P:tRNA wobble guanine modification"/>
    <property type="evidence" value="ECO:0007669"/>
    <property type="project" value="TreeGrafter"/>
</dbReference>
<dbReference type="GO" id="GO:0101030">
    <property type="term" value="P:tRNA-guanine transglycosylation"/>
    <property type="evidence" value="ECO:0007669"/>
    <property type="project" value="InterPro"/>
</dbReference>
<dbReference type="FunFam" id="3.20.20.105:FF:000001">
    <property type="entry name" value="Queuine tRNA-ribosyltransferase"/>
    <property type="match status" value="1"/>
</dbReference>
<dbReference type="Gene3D" id="3.20.20.105">
    <property type="entry name" value="Queuine tRNA-ribosyltransferase-like"/>
    <property type="match status" value="1"/>
</dbReference>
<dbReference type="HAMAP" id="MF_00168">
    <property type="entry name" value="Q_tRNA_Tgt"/>
    <property type="match status" value="1"/>
</dbReference>
<dbReference type="InterPro" id="IPR050076">
    <property type="entry name" value="ArchSynthase1/Queuine_TRR"/>
</dbReference>
<dbReference type="InterPro" id="IPR004803">
    <property type="entry name" value="TGT"/>
</dbReference>
<dbReference type="InterPro" id="IPR036511">
    <property type="entry name" value="TGT-like_sf"/>
</dbReference>
<dbReference type="InterPro" id="IPR002616">
    <property type="entry name" value="tRNA_ribo_trans-like"/>
</dbReference>
<dbReference type="NCBIfam" id="TIGR00430">
    <property type="entry name" value="Q_tRNA_tgt"/>
    <property type="match status" value="1"/>
</dbReference>
<dbReference type="NCBIfam" id="TIGR00449">
    <property type="entry name" value="tgt_general"/>
    <property type="match status" value="1"/>
</dbReference>
<dbReference type="PANTHER" id="PTHR46499">
    <property type="entry name" value="QUEUINE TRNA-RIBOSYLTRANSFERASE"/>
    <property type="match status" value="1"/>
</dbReference>
<dbReference type="PANTHER" id="PTHR46499:SF1">
    <property type="entry name" value="QUEUINE TRNA-RIBOSYLTRANSFERASE"/>
    <property type="match status" value="1"/>
</dbReference>
<dbReference type="Pfam" id="PF01702">
    <property type="entry name" value="TGT"/>
    <property type="match status" value="1"/>
</dbReference>
<dbReference type="SUPFAM" id="SSF51713">
    <property type="entry name" value="tRNA-guanine transglycosylase"/>
    <property type="match status" value="1"/>
</dbReference>
<sequence>MKFTLHKTNGMARRGTMTFNRPQGEFTVETPAFMPVGTYGTVKGMTPEEVRVTGAEILLGNTFHLWLRPGQEIMRQHGDLHDFMQWHRPILTDSGGFQVFSLGKLRKITEEGVKFQNPINGERIFLSPEKSMEIQYDLGSDIVMIFDECTPYPATFDYAKKSMEMSLRWAKRSRERFDELGNKNALFGIVQGSTFEDLRKLSIEGLINIGFDGYAVGGLAVGEPKEDMHRILAYVCPQLPADKPRYLMGVGKPEDLVEGVRRGIDMFDCVMPTRNARNGHLFVSNGIVKIRNAKYRNDTTSLDPECDCYTCKHYTKAYLYHLDKCGEILGARLNTIHNLHYYQRLMAQIRQAIEEDRFEDFVVEFYKKIGKSVPTR</sequence>
<protein>
    <recommendedName>
        <fullName evidence="1">Queuine tRNA-ribosyltransferase</fullName>
        <ecNumber evidence="1">2.4.2.29</ecNumber>
    </recommendedName>
    <alternativeName>
        <fullName evidence="1">Guanine insertion enzyme</fullName>
    </alternativeName>
    <alternativeName>
        <fullName evidence="1">tRNA-guanine transglycosylase</fullName>
    </alternativeName>
</protein>
<keyword id="KW-0328">Glycosyltransferase</keyword>
<keyword id="KW-0479">Metal-binding</keyword>
<keyword id="KW-0671">Queuosine biosynthesis</keyword>
<keyword id="KW-0808">Transferase</keyword>
<keyword id="KW-0819">tRNA processing</keyword>
<keyword id="KW-0862">Zinc</keyword>
<comment type="function">
    <text evidence="1">Catalyzes the base-exchange of a guanine (G) residue with the queuine precursor 7-aminomethyl-7-deazaguanine (PreQ1) at position 34 (anticodon wobble position) in tRNAs with GU(N) anticodons (tRNA-Asp, -Asn, -His and -Tyr). Catalysis occurs through a double-displacement mechanism. The nucleophile active site attacks the C1' of nucleotide 34 to detach the guanine base from the RNA, forming a covalent enzyme-RNA intermediate. The proton acceptor active site deprotonates the incoming PreQ1, allowing a nucleophilic attack on the C1' of the ribose to form the product. After dissociation, two additional enzymatic reactions on the tRNA convert PreQ1 to queuine (Q), resulting in the hypermodified nucleoside queuosine (7-(((4,5-cis-dihydroxy-2-cyclopenten-1-yl)amino)methyl)-7-deazaguanosine).</text>
</comment>
<comment type="catalytic activity">
    <reaction evidence="1">
        <text>7-aminomethyl-7-carbaguanine + guanosine(34) in tRNA = 7-aminomethyl-7-carbaguanosine(34) in tRNA + guanine</text>
        <dbReference type="Rhea" id="RHEA:24104"/>
        <dbReference type="Rhea" id="RHEA-COMP:10341"/>
        <dbReference type="Rhea" id="RHEA-COMP:10342"/>
        <dbReference type="ChEBI" id="CHEBI:16235"/>
        <dbReference type="ChEBI" id="CHEBI:58703"/>
        <dbReference type="ChEBI" id="CHEBI:74269"/>
        <dbReference type="ChEBI" id="CHEBI:82833"/>
        <dbReference type="EC" id="2.4.2.29"/>
    </reaction>
</comment>
<comment type="cofactor">
    <cofactor evidence="1">
        <name>Zn(2+)</name>
        <dbReference type="ChEBI" id="CHEBI:29105"/>
    </cofactor>
    <text evidence="1">Binds 1 zinc ion per subunit.</text>
</comment>
<comment type="pathway">
    <text evidence="1">tRNA modification; tRNA-queuosine biosynthesis.</text>
</comment>
<comment type="subunit">
    <text evidence="1">Homodimer. Within each dimer, one monomer is responsible for RNA recognition and catalysis, while the other monomer binds to the replacement base PreQ1.</text>
</comment>
<comment type="similarity">
    <text evidence="1">Belongs to the queuine tRNA-ribosyltransferase family.</text>
</comment>
<organism>
    <name type="scientific">Histophilus somni (strain 129Pt)</name>
    <name type="common">Haemophilus somnus</name>
    <dbReference type="NCBI Taxonomy" id="205914"/>
    <lineage>
        <taxon>Bacteria</taxon>
        <taxon>Pseudomonadati</taxon>
        <taxon>Pseudomonadota</taxon>
        <taxon>Gammaproteobacteria</taxon>
        <taxon>Pasteurellales</taxon>
        <taxon>Pasteurellaceae</taxon>
        <taxon>Histophilus</taxon>
    </lineage>
</organism>
<accession>Q0I4R8</accession>
<name>TGT_HISS1</name>
<evidence type="ECO:0000255" key="1">
    <source>
        <dbReference type="HAMAP-Rule" id="MF_00168"/>
    </source>
</evidence>